<reference key="1">
    <citation type="journal article" date="2004" name="Proc. Natl. Acad. Sci. U.S.A.">
        <title>Genome sequence of the deep-sea gamma-proteobacterium Idiomarina loihiensis reveals amino acid fermentation as a source of carbon and energy.</title>
        <authorList>
            <person name="Hou S."/>
            <person name="Saw J.H."/>
            <person name="Lee K.S."/>
            <person name="Freitas T.A."/>
            <person name="Belisle C."/>
            <person name="Kawarabayasi Y."/>
            <person name="Donachie S.P."/>
            <person name="Pikina A."/>
            <person name="Galperin M.Y."/>
            <person name="Koonin E.V."/>
            <person name="Makarova K.S."/>
            <person name="Omelchenko M.V."/>
            <person name="Sorokin A."/>
            <person name="Wolf Y.I."/>
            <person name="Li Q.X."/>
            <person name="Keum Y.S."/>
            <person name="Campbell S."/>
            <person name="Denery J."/>
            <person name="Aizawa S."/>
            <person name="Shibata S."/>
            <person name="Malahoff A."/>
            <person name="Alam M."/>
        </authorList>
    </citation>
    <scope>NUCLEOTIDE SEQUENCE [LARGE SCALE GENOMIC DNA]</scope>
    <source>
        <strain>ATCC BAA-735 / DSM 15497 / L2-TR</strain>
    </source>
</reference>
<dbReference type="EC" id="3.1.26.5" evidence="1"/>
<dbReference type="EMBL" id="AE017340">
    <property type="protein sequence ID" value="AAV83471.1"/>
    <property type="molecule type" value="Genomic_DNA"/>
</dbReference>
<dbReference type="RefSeq" id="WP_011235862.1">
    <property type="nucleotide sequence ID" value="NC_006512.1"/>
</dbReference>
<dbReference type="SMR" id="Q5QZK1"/>
<dbReference type="STRING" id="283942.IL2639"/>
<dbReference type="GeneID" id="41337837"/>
<dbReference type="KEGG" id="ilo:IL2639"/>
<dbReference type="eggNOG" id="COG0594">
    <property type="taxonomic scope" value="Bacteria"/>
</dbReference>
<dbReference type="HOGENOM" id="CLU_117179_11_0_6"/>
<dbReference type="OrthoDB" id="9796422at2"/>
<dbReference type="Proteomes" id="UP000001171">
    <property type="component" value="Chromosome"/>
</dbReference>
<dbReference type="GO" id="GO:0030677">
    <property type="term" value="C:ribonuclease P complex"/>
    <property type="evidence" value="ECO:0007669"/>
    <property type="project" value="TreeGrafter"/>
</dbReference>
<dbReference type="GO" id="GO:0042781">
    <property type="term" value="F:3'-tRNA processing endoribonuclease activity"/>
    <property type="evidence" value="ECO:0007669"/>
    <property type="project" value="TreeGrafter"/>
</dbReference>
<dbReference type="GO" id="GO:0004526">
    <property type="term" value="F:ribonuclease P activity"/>
    <property type="evidence" value="ECO:0007669"/>
    <property type="project" value="UniProtKB-UniRule"/>
</dbReference>
<dbReference type="GO" id="GO:0000049">
    <property type="term" value="F:tRNA binding"/>
    <property type="evidence" value="ECO:0007669"/>
    <property type="project" value="UniProtKB-UniRule"/>
</dbReference>
<dbReference type="GO" id="GO:0001682">
    <property type="term" value="P:tRNA 5'-leader removal"/>
    <property type="evidence" value="ECO:0007669"/>
    <property type="project" value="UniProtKB-UniRule"/>
</dbReference>
<dbReference type="Gene3D" id="3.30.230.10">
    <property type="match status" value="1"/>
</dbReference>
<dbReference type="HAMAP" id="MF_00227">
    <property type="entry name" value="RNase_P"/>
    <property type="match status" value="1"/>
</dbReference>
<dbReference type="InterPro" id="IPR020568">
    <property type="entry name" value="Ribosomal_Su5_D2-typ_SF"/>
</dbReference>
<dbReference type="InterPro" id="IPR014721">
    <property type="entry name" value="Ribsml_uS5_D2-typ_fold_subgr"/>
</dbReference>
<dbReference type="InterPro" id="IPR000100">
    <property type="entry name" value="RNase_P"/>
</dbReference>
<dbReference type="InterPro" id="IPR020539">
    <property type="entry name" value="RNase_P_CS"/>
</dbReference>
<dbReference type="NCBIfam" id="TIGR00188">
    <property type="entry name" value="rnpA"/>
    <property type="match status" value="1"/>
</dbReference>
<dbReference type="PANTHER" id="PTHR33992">
    <property type="entry name" value="RIBONUCLEASE P PROTEIN COMPONENT"/>
    <property type="match status" value="1"/>
</dbReference>
<dbReference type="PANTHER" id="PTHR33992:SF1">
    <property type="entry name" value="RIBONUCLEASE P PROTEIN COMPONENT"/>
    <property type="match status" value="1"/>
</dbReference>
<dbReference type="Pfam" id="PF00825">
    <property type="entry name" value="Ribonuclease_P"/>
    <property type="match status" value="1"/>
</dbReference>
<dbReference type="SUPFAM" id="SSF54211">
    <property type="entry name" value="Ribosomal protein S5 domain 2-like"/>
    <property type="match status" value="1"/>
</dbReference>
<dbReference type="PROSITE" id="PS00648">
    <property type="entry name" value="RIBONUCLEASE_P"/>
    <property type="match status" value="1"/>
</dbReference>
<keyword id="KW-0255">Endonuclease</keyword>
<keyword id="KW-0378">Hydrolase</keyword>
<keyword id="KW-0540">Nuclease</keyword>
<keyword id="KW-1185">Reference proteome</keyword>
<keyword id="KW-0694">RNA-binding</keyword>
<keyword id="KW-0819">tRNA processing</keyword>
<proteinExistence type="inferred from homology"/>
<organism>
    <name type="scientific">Idiomarina loihiensis (strain ATCC BAA-735 / DSM 15497 / L2-TR)</name>
    <dbReference type="NCBI Taxonomy" id="283942"/>
    <lineage>
        <taxon>Bacteria</taxon>
        <taxon>Pseudomonadati</taxon>
        <taxon>Pseudomonadota</taxon>
        <taxon>Gammaproteobacteria</taxon>
        <taxon>Alteromonadales</taxon>
        <taxon>Idiomarinaceae</taxon>
        <taxon>Idiomarina</taxon>
    </lineage>
</organism>
<name>RNPA_IDILO</name>
<accession>Q5QZK1</accession>
<evidence type="ECO:0000255" key="1">
    <source>
        <dbReference type="HAMAP-Rule" id="MF_00227"/>
    </source>
</evidence>
<protein>
    <recommendedName>
        <fullName evidence="1">Ribonuclease P protein component</fullName>
        <shortName evidence="1">RNase P protein</shortName>
        <shortName evidence="1">RNaseP protein</shortName>
        <ecNumber evidence="1">3.1.26.5</ecNumber>
    </recommendedName>
    <alternativeName>
        <fullName evidence="1">Protein C5</fullName>
    </alternativeName>
</protein>
<sequence length="125" mass="14514">MHKSISYGRELRLLTPSHFQTVFSNPPVKAVTAHVTMLATPNELGHPRIGVTVSKKRAKRAVDRNRIKRQIRETFRLRQHKIPAFDIVIIAKQGIVEQDNAALRDTLNYLWRKLAKRCEQYQSRS</sequence>
<comment type="function">
    <text evidence="1">RNaseP catalyzes the removal of the 5'-leader sequence from pre-tRNA to produce the mature 5'-terminus. It can also cleave other RNA substrates such as 4.5S RNA. The protein component plays an auxiliary but essential role in vivo by binding to the 5'-leader sequence and broadening the substrate specificity of the ribozyme.</text>
</comment>
<comment type="catalytic activity">
    <reaction evidence="1">
        <text>Endonucleolytic cleavage of RNA, removing 5'-extranucleotides from tRNA precursor.</text>
        <dbReference type="EC" id="3.1.26.5"/>
    </reaction>
</comment>
<comment type="subunit">
    <text evidence="1">Consists of a catalytic RNA component (M1 or rnpB) and a protein subunit.</text>
</comment>
<comment type="similarity">
    <text evidence="1">Belongs to the RnpA family.</text>
</comment>
<feature type="chain" id="PRO_0000198471" description="Ribonuclease P protein component">
    <location>
        <begin position="1"/>
        <end position="125"/>
    </location>
</feature>
<gene>
    <name evidence="1" type="primary">rnpA</name>
    <name type="ordered locus">IL2639</name>
</gene>